<keyword id="KW-0028">Amino-acid biosynthesis</keyword>
<keyword id="KW-0057">Aromatic amino acid biosynthesis</keyword>
<keyword id="KW-0328">Glycosyltransferase</keyword>
<keyword id="KW-0460">Magnesium</keyword>
<keyword id="KW-0479">Metal-binding</keyword>
<keyword id="KW-1185">Reference proteome</keyword>
<keyword id="KW-0808">Transferase</keyword>
<keyword id="KW-0822">Tryptophan biosynthesis</keyword>
<organism>
    <name type="scientific">Chromobacterium violaceum (strain ATCC 12472 / DSM 30191 / JCM 1249 / CCUG 213 / NBRC 12614 / NCIMB 9131 / NCTC 9757 / MK)</name>
    <dbReference type="NCBI Taxonomy" id="243365"/>
    <lineage>
        <taxon>Bacteria</taxon>
        <taxon>Pseudomonadati</taxon>
        <taxon>Pseudomonadota</taxon>
        <taxon>Betaproteobacteria</taxon>
        <taxon>Neisseriales</taxon>
        <taxon>Chromobacteriaceae</taxon>
        <taxon>Chromobacterium</taxon>
    </lineage>
</organism>
<name>TRPD_CHRVO</name>
<proteinExistence type="inferred from homology"/>
<evidence type="ECO:0000255" key="1">
    <source>
        <dbReference type="HAMAP-Rule" id="MF_00211"/>
    </source>
</evidence>
<dbReference type="EC" id="2.4.2.18" evidence="1"/>
<dbReference type="EMBL" id="AE016825">
    <property type="protein sequence ID" value="AAQ59846.1"/>
    <property type="molecule type" value="Genomic_DNA"/>
</dbReference>
<dbReference type="RefSeq" id="WP_011135721.1">
    <property type="nucleotide sequence ID" value="NC_005085.1"/>
</dbReference>
<dbReference type="SMR" id="Q7NW17"/>
<dbReference type="STRING" id="243365.CV_2173"/>
<dbReference type="KEGG" id="cvi:CV_2173"/>
<dbReference type="eggNOG" id="COG0547">
    <property type="taxonomic scope" value="Bacteria"/>
</dbReference>
<dbReference type="HOGENOM" id="CLU_034315_2_1_4"/>
<dbReference type="OrthoDB" id="9806430at2"/>
<dbReference type="UniPathway" id="UPA00035">
    <property type="reaction ID" value="UER00041"/>
</dbReference>
<dbReference type="Proteomes" id="UP000001424">
    <property type="component" value="Chromosome"/>
</dbReference>
<dbReference type="GO" id="GO:0005829">
    <property type="term" value="C:cytosol"/>
    <property type="evidence" value="ECO:0007669"/>
    <property type="project" value="TreeGrafter"/>
</dbReference>
<dbReference type="GO" id="GO:0004048">
    <property type="term" value="F:anthranilate phosphoribosyltransferase activity"/>
    <property type="evidence" value="ECO:0007669"/>
    <property type="project" value="UniProtKB-UniRule"/>
</dbReference>
<dbReference type="GO" id="GO:0000287">
    <property type="term" value="F:magnesium ion binding"/>
    <property type="evidence" value="ECO:0007669"/>
    <property type="project" value="UniProtKB-UniRule"/>
</dbReference>
<dbReference type="GO" id="GO:0000162">
    <property type="term" value="P:L-tryptophan biosynthetic process"/>
    <property type="evidence" value="ECO:0007669"/>
    <property type="project" value="UniProtKB-UniRule"/>
</dbReference>
<dbReference type="FunFam" id="1.20.970.10:FF:000006">
    <property type="entry name" value="Anthranilate phosphoribosyltransferase"/>
    <property type="match status" value="1"/>
</dbReference>
<dbReference type="FunFam" id="3.40.1030.10:FF:000002">
    <property type="entry name" value="Anthranilate phosphoribosyltransferase"/>
    <property type="match status" value="1"/>
</dbReference>
<dbReference type="Gene3D" id="3.40.1030.10">
    <property type="entry name" value="Nucleoside phosphorylase/phosphoribosyltransferase catalytic domain"/>
    <property type="match status" value="1"/>
</dbReference>
<dbReference type="Gene3D" id="1.20.970.10">
    <property type="entry name" value="Transferase, Pyrimidine Nucleoside Phosphorylase, Chain C"/>
    <property type="match status" value="1"/>
</dbReference>
<dbReference type="HAMAP" id="MF_00211">
    <property type="entry name" value="TrpD"/>
    <property type="match status" value="1"/>
</dbReference>
<dbReference type="InterPro" id="IPR005940">
    <property type="entry name" value="Anthranilate_Pribosyl_Tfrase"/>
</dbReference>
<dbReference type="InterPro" id="IPR000312">
    <property type="entry name" value="Glycosyl_Trfase_fam3"/>
</dbReference>
<dbReference type="InterPro" id="IPR017459">
    <property type="entry name" value="Glycosyl_Trfase_fam3_N_dom"/>
</dbReference>
<dbReference type="InterPro" id="IPR036320">
    <property type="entry name" value="Glycosyl_Trfase_fam3_N_dom_sf"/>
</dbReference>
<dbReference type="InterPro" id="IPR035902">
    <property type="entry name" value="Nuc_phospho_transferase"/>
</dbReference>
<dbReference type="NCBIfam" id="TIGR01245">
    <property type="entry name" value="trpD"/>
    <property type="match status" value="1"/>
</dbReference>
<dbReference type="PANTHER" id="PTHR43285">
    <property type="entry name" value="ANTHRANILATE PHOSPHORIBOSYLTRANSFERASE"/>
    <property type="match status" value="1"/>
</dbReference>
<dbReference type="PANTHER" id="PTHR43285:SF2">
    <property type="entry name" value="ANTHRANILATE PHOSPHORIBOSYLTRANSFERASE"/>
    <property type="match status" value="1"/>
</dbReference>
<dbReference type="Pfam" id="PF02885">
    <property type="entry name" value="Glycos_trans_3N"/>
    <property type="match status" value="1"/>
</dbReference>
<dbReference type="Pfam" id="PF00591">
    <property type="entry name" value="Glycos_transf_3"/>
    <property type="match status" value="1"/>
</dbReference>
<dbReference type="SUPFAM" id="SSF52418">
    <property type="entry name" value="Nucleoside phosphorylase/phosphoribosyltransferase catalytic domain"/>
    <property type="match status" value="1"/>
</dbReference>
<dbReference type="SUPFAM" id="SSF47648">
    <property type="entry name" value="Nucleoside phosphorylase/phosphoribosyltransferase N-terminal domain"/>
    <property type="match status" value="1"/>
</dbReference>
<protein>
    <recommendedName>
        <fullName evidence="1">Anthranilate phosphoribosyltransferase</fullName>
        <ecNumber evidence="1">2.4.2.18</ecNumber>
    </recommendedName>
</protein>
<sequence>MITPQAALNRLIDGNELFYDEMLALMRQIMRGELSPAQTAAILIGLRVKVESVSEIAAAATVMREFATHVPVSDRRHLVDTCGTGGDKSHTFNISTTSAFVAAAAGARVAKHGGRSVSSSSGSADVLELLGVNLQLTPEQVGQCLDEIGLGFMFAPNHHSAMKHVAPIRKELGARTIFNILGPLTNPAAADHQLMGVFHPDLVGIQSRVLKMLGSRHVMIVHGCDGLDELTLSGPSMVAELKNGEILEYELEPGEFGFPLCELKDLRADTAAQSRDRLLAVLDGQPGPARDIVLLNAGAAIYTADIAPSLADGVTMAREALDSGKAKQKLQQLIALSRKLGG</sequence>
<feature type="chain" id="PRO_0000227147" description="Anthranilate phosphoribosyltransferase">
    <location>
        <begin position="1"/>
        <end position="342"/>
    </location>
</feature>
<feature type="binding site" evidence="1">
    <location>
        <position position="83"/>
    </location>
    <ligand>
        <name>5-phospho-alpha-D-ribose 1-diphosphate</name>
        <dbReference type="ChEBI" id="CHEBI:58017"/>
    </ligand>
</feature>
<feature type="binding site" evidence="1">
    <location>
        <position position="83"/>
    </location>
    <ligand>
        <name>anthranilate</name>
        <dbReference type="ChEBI" id="CHEBI:16567"/>
        <label>1</label>
    </ligand>
</feature>
<feature type="binding site" evidence="1">
    <location>
        <begin position="86"/>
        <end position="87"/>
    </location>
    <ligand>
        <name>5-phospho-alpha-D-ribose 1-diphosphate</name>
        <dbReference type="ChEBI" id="CHEBI:58017"/>
    </ligand>
</feature>
<feature type="binding site" evidence="1">
    <location>
        <position position="91"/>
    </location>
    <ligand>
        <name>5-phospho-alpha-D-ribose 1-diphosphate</name>
        <dbReference type="ChEBI" id="CHEBI:58017"/>
    </ligand>
</feature>
<feature type="binding site" evidence="1">
    <location>
        <begin position="93"/>
        <end position="96"/>
    </location>
    <ligand>
        <name>5-phospho-alpha-D-ribose 1-diphosphate</name>
        <dbReference type="ChEBI" id="CHEBI:58017"/>
    </ligand>
</feature>
<feature type="binding site" evidence="1">
    <location>
        <position position="95"/>
    </location>
    <ligand>
        <name>Mg(2+)</name>
        <dbReference type="ChEBI" id="CHEBI:18420"/>
        <label>1</label>
    </ligand>
</feature>
<feature type="binding site" evidence="1">
    <location>
        <begin position="111"/>
        <end position="119"/>
    </location>
    <ligand>
        <name>5-phospho-alpha-D-ribose 1-diphosphate</name>
        <dbReference type="ChEBI" id="CHEBI:58017"/>
    </ligand>
</feature>
<feature type="binding site" evidence="1">
    <location>
        <position position="123"/>
    </location>
    <ligand>
        <name>5-phospho-alpha-D-ribose 1-diphosphate</name>
        <dbReference type="ChEBI" id="CHEBI:58017"/>
    </ligand>
</feature>
<feature type="binding site" evidence="1">
    <location>
        <position position="169"/>
    </location>
    <ligand>
        <name>anthranilate</name>
        <dbReference type="ChEBI" id="CHEBI:16567"/>
        <label>2</label>
    </ligand>
</feature>
<feature type="binding site" evidence="1">
    <location>
        <position position="228"/>
    </location>
    <ligand>
        <name>Mg(2+)</name>
        <dbReference type="ChEBI" id="CHEBI:18420"/>
        <label>2</label>
    </ligand>
</feature>
<feature type="binding site" evidence="1">
    <location>
        <position position="229"/>
    </location>
    <ligand>
        <name>Mg(2+)</name>
        <dbReference type="ChEBI" id="CHEBI:18420"/>
        <label>1</label>
    </ligand>
</feature>
<feature type="binding site" evidence="1">
    <location>
        <position position="229"/>
    </location>
    <ligand>
        <name>Mg(2+)</name>
        <dbReference type="ChEBI" id="CHEBI:18420"/>
        <label>2</label>
    </ligand>
</feature>
<accession>Q7NW17</accession>
<gene>
    <name evidence="1" type="primary">trpD</name>
    <name type="ordered locus">CV_2173</name>
</gene>
<comment type="function">
    <text evidence="1">Catalyzes the transfer of the phosphoribosyl group of 5-phosphorylribose-1-pyrophosphate (PRPP) to anthranilate to yield N-(5'-phosphoribosyl)-anthranilate (PRA).</text>
</comment>
<comment type="catalytic activity">
    <reaction evidence="1">
        <text>N-(5-phospho-beta-D-ribosyl)anthranilate + diphosphate = 5-phospho-alpha-D-ribose 1-diphosphate + anthranilate</text>
        <dbReference type="Rhea" id="RHEA:11768"/>
        <dbReference type="ChEBI" id="CHEBI:16567"/>
        <dbReference type="ChEBI" id="CHEBI:18277"/>
        <dbReference type="ChEBI" id="CHEBI:33019"/>
        <dbReference type="ChEBI" id="CHEBI:58017"/>
        <dbReference type="EC" id="2.4.2.18"/>
    </reaction>
</comment>
<comment type="cofactor">
    <cofactor evidence="1">
        <name>Mg(2+)</name>
        <dbReference type="ChEBI" id="CHEBI:18420"/>
    </cofactor>
    <text evidence="1">Binds 2 magnesium ions per monomer.</text>
</comment>
<comment type="pathway">
    <text evidence="1">Amino-acid biosynthesis; L-tryptophan biosynthesis; L-tryptophan from chorismate: step 2/5.</text>
</comment>
<comment type="subunit">
    <text evidence="1">Homodimer.</text>
</comment>
<comment type="similarity">
    <text evidence="1">Belongs to the anthranilate phosphoribosyltransferase family.</text>
</comment>
<reference key="1">
    <citation type="journal article" date="2003" name="Proc. Natl. Acad. Sci. U.S.A.">
        <title>The complete genome sequence of Chromobacterium violaceum reveals remarkable and exploitable bacterial adaptability.</title>
        <authorList>
            <person name="Vasconcelos A.T.R."/>
            <person name="de Almeida D.F."/>
            <person name="Hungria M."/>
            <person name="Guimaraes C.T."/>
            <person name="Antonio R.V."/>
            <person name="Almeida F.C."/>
            <person name="de Almeida L.G.P."/>
            <person name="de Almeida R."/>
            <person name="Alves-Gomes J.A."/>
            <person name="Andrade E.M."/>
            <person name="Araripe J."/>
            <person name="de Araujo M.F.F."/>
            <person name="Astolfi-Filho S."/>
            <person name="Azevedo V."/>
            <person name="Baptista A.J."/>
            <person name="Bataus L.A.M."/>
            <person name="Batista J.S."/>
            <person name="Belo A."/>
            <person name="van den Berg C."/>
            <person name="Bogo M."/>
            <person name="Bonatto S."/>
            <person name="Bordignon J."/>
            <person name="Brigido M.M."/>
            <person name="Brito C.A."/>
            <person name="Brocchi M."/>
            <person name="Burity H.A."/>
            <person name="Camargo A.A."/>
            <person name="Cardoso D.D.P."/>
            <person name="Carneiro N.P."/>
            <person name="Carraro D.M."/>
            <person name="Carvalho C.M.B."/>
            <person name="Cascardo J.C.M."/>
            <person name="Cavada B.S."/>
            <person name="Chueire L.M.O."/>
            <person name="Creczynski-Pasa T.B."/>
            <person name="Cunha-Junior N.C."/>
            <person name="Fagundes N."/>
            <person name="Falcao C.L."/>
            <person name="Fantinatti F."/>
            <person name="Farias I.P."/>
            <person name="Felipe M.S.S."/>
            <person name="Ferrari L.P."/>
            <person name="Ferro J.A."/>
            <person name="Ferro M.I.T."/>
            <person name="Franco G.R."/>
            <person name="Freitas N.S.A."/>
            <person name="Furlan L.R."/>
            <person name="Gazzinelli R.T."/>
            <person name="Gomes E.A."/>
            <person name="Goncalves P.R."/>
            <person name="Grangeiro T.B."/>
            <person name="Grattapaglia D."/>
            <person name="Grisard E.C."/>
            <person name="Hanna E.S."/>
            <person name="Jardim S.N."/>
            <person name="Laurino J."/>
            <person name="Leoi L.C.T."/>
            <person name="Lima L.F.A."/>
            <person name="Loureiro M.F."/>
            <person name="Lyra M.C.C.P."/>
            <person name="Madeira H.M.F."/>
            <person name="Manfio G.P."/>
            <person name="Maranhao A.Q."/>
            <person name="Martins W.S."/>
            <person name="di Mauro S.M.Z."/>
            <person name="de Medeiros S.R.B."/>
            <person name="Meissner R.V."/>
            <person name="Moreira M.A.M."/>
            <person name="Nascimento F.F."/>
            <person name="Nicolas M.F."/>
            <person name="Oliveira J.G."/>
            <person name="Oliveira S.C."/>
            <person name="Paixao R.F.C."/>
            <person name="Parente J.A."/>
            <person name="Pedrosa F.O."/>
            <person name="Pena S.D.J."/>
            <person name="Pereira J.O."/>
            <person name="Pereira M."/>
            <person name="Pinto L.S.R.C."/>
            <person name="Pinto L.S."/>
            <person name="Porto J.I.R."/>
            <person name="Potrich D.P."/>
            <person name="Ramalho-Neto C.E."/>
            <person name="Reis A.M.M."/>
            <person name="Rigo L.U."/>
            <person name="Rondinelli E."/>
            <person name="Santos E.B.P."/>
            <person name="Santos F.R."/>
            <person name="Schneider M.P.C."/>
            <person name="Seuanez H.N."/>
            <person name="Silva A.M.R."/>
            <person name="da Silva A.L.C."/>
            <person name="Silva D.W."/>
            <person name="Silva R."/>
            <person name="Simoes I.C."/>
            <person name="Simon D."/>
            <person name="Soares C.M.A."/>
            <person name="Soares R.B.A."/>
            <person name="Souza E.M."/>
            <person name="Souza K.R.L."/>
            <person name="Souza R.C."/>
            <person name="Steffens M.B.R."/>
            <person name="Steindel M."/>
            <person name="Teixeira S.R."/>
            <person name="Urmenyi T."/>
            <person name="Vettore A."/>
            <person name="Wassem R."/>
            <person name="Zaha A."/>
            <person name="Simpson A.J.G."/>
        </authorList>
    </citation>
    <scope>NUCLEOTIDE SEQUENCE [LARGE SCALE GENOMIC DNA]</scope>
    <source>
        <strain>ATCC 12472 / DSM 30191 / JCM 1249 / CCUG 213 / NBRC 12614 / NCIMB 9131 / NCTC 9757 / MK</strain>
    </source>
</reference>